<sequence length="63" mass="7273">MASKKVHQINVKGFFDMDVMEVTEQTKEAEYTYDFKEILSEFNGKNVSITVKEENELPVKGVE</sequence>
<dbReference type="EMBL" id="AL009126">
    <property type="protein sequence ID" value="CAB14024.1"/>
    <property type="molecule type" value="Genomic_DNA"/>
</dbReference>
<dbReference type="RefSeq" id="NP_389989.1">
    <property type="nucleotide sequence ID" value="NC_000964.3"/>
</dbReference>
<dbReference type="RefSeq" id="WP_004399317.1">
    <property type="nucleotide sequence ID" value="NZ_OZ025638.1"/>
</dbReference>
<dbReference type="PDB" id="2H4O">
    <property type="method" value="X-ray"/>
    <property type="resolution" value="2.80 A"/>
    <property type="chains" value="A/B/C/D=1-63"/>
</dbReference>
<dbReference type="PDBsum" id="2H4O"/>
<dbReference type="SMR" id="O31947"/>
<dbReference type="FunCoup" id="O31947">
    <property type="interactions" value="65"/>
</dbReference>
<dbReference type="STRING" id="224308.BSU21060"/>
<dbReference type="PaxDb" id="224308-BSU21060"/>
<dbReference type="EnsemblBacteria" id="CAB14024">
    <property type="protein sequence ID" value="CAB14024"/>
    <property type="gene ID" value="BSU_21060"/>
</dbReference>
<dbReference type="GeneID" id="939166"/>
<dbReference type="KEGG" id="bsu:BSU21060"/>
<dbReference type="PATRIC" id="fig|224308.179.peg.2300"/>
<dbReference type="InParanoid" id="O31947"/>
<dbReference type="OrthoDB" id="2907886at2"/>
<dbReference type="BioCyc" id="BSUB:BSU21060-MONOMER"/>
<dbReference type="EvolutionaryTrace" id="O31947"/>
<dbReference type="Proteomes" id="UP000001570">
    <property type="component" value="Chromosome"/>
</dbReference>
<dbReference type="Gene3D" id="6.20.120.10">
    <property type="match status" value="1"/>
</dbReference>
<dbReference type="InterPro" id="IPR018600">
    <property type="entry name" value="Phage_SP-beta_YonK"/>
</dbReference>
<dbReference type="InterPro" id="IPR037261">
    <property type="entry name" value="YonK_sf"/>
</dbReference>
<dbReference type="Pfam" id="PF09642">
    <property type="entry name" value="YonK"/>
    <property type="match status" value="1"/>
</dbReference>
<dbReference type="SUPFAM" id="SSF160570">
    <property type="entry name" value="YonK-like"/>
    <property type="match status" value="1"/>
</dbReference>
<evidence type="ECO:0000305" key="1"/>
<evidence type="ECO:0007829" key="2">
    <source>
        <dbReference type="PDB" id="2H4O"/>
    </source>
</evidence>
<accession>O31947</accession>
<keyword id="KW-0002">3D-structure</keyword>
<keyword id="KW-1185">Reference proteome</keyword>
<gene>
    <name type="primary">yonK</name>
    <name type="ordered locus">BSU21060</name>
</gene>
<reference key="1">
    <citation type="journal article" date="1997" name="Nature">
        <title>The complete genome sequence of the Gram-positive bacterium Bacillus subtilis.</title>
        <authorList>
            <person name="Kunst F."/>
            <person name="Ogasawara N."/>
            <person name="Moszer I."/>
            <person name="Albertini A.M."/>
            <person name="Alloni G."/>
            <person name="Azevedo V."/>
            <person name="Bertero M.G."/>
            <person name="Bessieres P."/>
            <person name="Bolotin A."/>
            <person name="Borchert S."/>
            <person name="Borriss R."/>
            <person name="Boursier L."/>
            <person name="Brans A."/>
            <person name="Braun M."/>
            <person name="Brignell S.C."/>
            <person name="Bron S."/>
            <person name="Brouillet S."/>
            <person name="Bruschi C.V."/>
            <person name="Caldwell B."/>
            <person name="Capuano V."/>
            <person name="Carter N.M."/>
            <person name="Choi S.-K."/>
            <person name="Codani J.-J."/>
            <person name="Connerton I.F."/>
            <person name="Cummings N.J."/>
            <person name="Daniel R.A."/>
            <person name="Denizot F."/>
            <person name="Devine K.M."/>
            <person name="Duesterhoeft A."/>
            <person name="Ehrlich S.D."/>
            <person name="Emmerson P.T."/>
            <person name="Entian K.-D."/>
            <person name="Errington J."/>
            <person name="Fabret C."/>
            <person name="Ferrari E."/>
            <person name="Foulger D."/>
            <person name="Fritz C."/>
            <person name="Fujita M."/>
            <person name="Fujita Y."/>
            <person name="Fuma S."/>
            <person name="Galizzi A."/>
            <person name="Galleron N."/>
            <person name="Ghim S.-Y."/>
            <person name="Glaser P."/>
            <person name="Goffeau A."/>
            <person name="Golightly E.J."/>
            <person name="Grandi G."/>
            <person name="Guiseppi G."/>
            <person name="Guy B.J."/>
            <person name="Haga K."/>
            <person name="Haiech J."/>
            <person name="Harwood C.R."/>
            <person name="Henaut A."/>
            <person name="Hilbert H."/>
            <person name="Holsappel S."/>
            <person name="Hosono S."/>
            <person name="Hullo M.-F."/>
            <person name="Itaya M."/>
            <person name="Jones L.-M."/>
            <person name="Joris B."/>
            <person name="Karamata D."/>
            <person name="Kasahara Y."/>
            <person name="Klaerr-Blanchard M."/>
            <person name="Klein C."/>
            <person name="Kobayashi Y."/>
            <person name="Koetter P."/>
            <person name="Koningstein G."/>
            <person name="Krogh S."/>
            <person name="Kumano M."/>
            <person name="Kurita K."/>
            <person name="Lapidus A."/>
            <person name="Lardinois S."/>
            <person name="Lauber J."/>
            <person name="Lazarevic V."/>
            <person name="Lee S.-M."/>
            <person name="Levine A."/>
            <person name="Liu H."/>
            <person name="Masuda S."/>
            <person name="Mauel C."/>
            <person name="Medigue C."/>
            <person name="Medina N."/>
            <person name="Mellado R.P."/>
            <person name="Mizuno M."/>
            <person name="Moestl D."/>
            <person name="Nakai S."/>
            <person name="Noback M."/>
            <person name="Noone D."/>
            <person name="O'Reilly M."/>
            <person name="Ogawa K."/>
            <person name="Ogiwara A."/>
            <person name="Oudega B."/>
            <person name="Park S.-H."/>
            <person name="Parro V."/>
            <person name="Pohl T.M."/>
            <person name="Portetelle D."/>
            <person name="Porwollik S."/>
            <person name="Prescott A.M."/>
            <person name="Presecan E."/>
            <person name="Pujic P."/>
            <person name="Purnelle B."/>
            <person name="Rapoport G."/>
            <person name="Rey M."/>
            <person name="Reynolds S."/>
            <person name="Rieger M."/>
            <person name="Rivolta C."/>
            <person name="Rocha E."/>
            <person name="Roche B."/>
            <person name="Rose M."/>
            <person name="Sadaie Y."/>
            <person name="Sato T."/>
            <person name="Scanlan E."/>
            <person name="Schleich S."/>
            <person name="Schroeter R."/>
            <person name="Scoffone F."/>
            <person name="Sekiguchi J."/>
            <person name="Sekowska A."/>
            <person name="Seror S.J."/>
            <person name="Serror P."/>
            <person name="Shin B.-S."/>
            <person name="Soldo B."/>
            <person name="Sorokin A."/>
            <person name="Tacconi E."/>
            <person name="Takagi T."/>
            <person name="Takahashi H."/>
            <person name="Takemaru K."/>
            <person name="Takeuchi M."/>
            <person name="Tamakoshi A."/>
            <person name="Tanaka T."/>
            <person name="Terpstra P."/>
            <person name="Tognoni A."/>
            <person name="Tosato V."/>
            <person name="Uchiyama S."/>
            <person name="Vandenbol M."/>
            <person name="Vannier F."/>
            <person name="Vassarotti A."/>
            <person name="Viari A."/>
            <person name="Wambutt R."/>
            <person name="Wedler E."/>
            <person name="Wedler H."/>
            <person name="Weitzenegger T."/>
            <person name="Winters P."/>
            <person name="Wipat A."/>
            <person name="Yamamoto H."/>
            <person name="Yamane K."/>
            <person name="Yasumoto K."/>
            <person name="Yata K."/>
            <person name="Yoshida K."/>
            <person name="Yoshikawa H.-F."/>
            <person name="Zumstein E."/>
            <person name="Yoshikawa H."/>
            <person name="Danchin A."/>
        </authorList>
    </citation>
    <scope>NUCLEOTIDE SEQUENCE [LARGE SCALE GENOMIC DNA]</scope>
    <source>
        <strain>168</strain>
    </source>
</reference>
<reference key="2">
    <citation type="submission" date="2006-07" db="PDB data bank">
        <title>Crystal structure of the hypothetical protein from Bacillus subtilis (yonK).</title>
        <authorList>
            <consortium name="Northeast structural genomics consortium (NESG)"/>
        </authorList>
    </citation>
    <scope>X-RAY CRYSTALLOGRAPHY (2.8 ANGSTROMS)</scope>
    <scope>SUBUNIT</scope>
</reference>
<comment type="subunit">
    <text evidence="1">Octamer.</text>
</comment>
<feature type="chain" id="PRO_0000359927" description="SPbeta prophage-derived uncharacterized protein YonK">
    <location>
        <begin position="1"/>
        <end position="63"/>
    </location>
</feature>
<feature type="strand" evidence="2">
    <location>
        <begin position="4"/>
        <end position="10"/>
    </location>
</feature>
<feature type="strand" evidence="2">
    <location>
        <begin position="13"/>
        <end position="16"/>
    </location>
</feature>
<feature type="turn" evidence="2">
    <location>
        <begin position="17"/>
        <end position="20"/>
    </location>
</feature>
<feature type="strand" evidence="2">
    <location>
        <begin position="21"/>
        <end position="25"/>
    </location>
</feature>
<feature type="strand" evidence="2">
    <location>
        <begin position="30"/>
        <end position="34"/>
    </location>
</feature>
<feature type="helix" evidence="2">
    <location>
        <begin position="35"/>
        <end position="40"/>
    </location>
</feature>
<feature type="turn" evidence="2">
    <location>
        <begin position="41"/>
        <end position="44"/>
    </location>
</feature>
<protein>
    <recommendedName>
        <fullName>SPbeta prophage-derived uncharacterized protein YonK</fullName>
    </recommendedName>
</protein>
<organism>
    <name type="scientific">Bacillus subtilis (strain 168)</name>
    <dbReference type="NCBI Taxonomy" id="224308"/>
    <lineage>
        <taxon>Bacteria</taxon>
        <taxon>Bacillati</taxon>
        <taxon>Bacillota</taxon>
        <taxon>Bacilli</taxon>
        <taxon>Bacillales</taxon>
        <taxon>Bacillaceae</taxon>
        <taxon>Bacillus</taxon>
    </lineage>
</organism>
<proteinExistence type="evidence at protein level"/>
<name>YONK_BACSU</name>